<name>ENOB_PIG</name>
<organism>
    <name type="scientific">Sus scrofa</name>
    <name type="common">Pig</name>
    <dbReference type="NCBI Taxonomy" id="9823"/>
    <lineage>
        <taxon>Eukaryota</taxon>
        <taxon>Metazoa</taxon>
        <taxon>Chordata</taxon>
        <taxon>Craniata</taxon>
        <taxon>Vertebrata</taxon>
        <taxon>Euteleostomi</taxon>
        <taxon>Mammalia</taxon>
        <taxon>Eutheria</taxon>
        <taxon>Laurasiatheria</taxon>
        <taxon>Artiodactyla</taxon>
        <taxon>Suina</taxon>
        <taxon>Suidae</taxon>
        <taxon>Sus</taxon>
    </lineage>
</organism>
<keyword id="KW-0007">Acetylation</keyword>
<keyword id="KW-0963">Cytoplasm</keyword>
<keyword id="KW-0324">Glycolysis</keyword>
<keyword id="KW-0456">Lyase</keyword>
<keyword id="KW-0460">Magnesium</keyword>
<keyword id="KW-0479">Metal-binding</keyword>
<keyword id="KW-0597">Phosphoprotein</keyword>
<keyword id="KW-1185">Reference proteome</keyword>
<proteinExistence type="evidence at transcript level"/>
<gene>
    <name type="primary">ENO3</name>
</gene>
<protein>
    <recommendedName>
        <fullName>Beta-enolase</fullName>
        <ecNumber evidence="3">4.2.1.11</ecNumber>
    </recommendedName>
    <alternativeName>
        <fullName>2-phospho-D-glycerate hydro-lyase</fullName>
    </alternativeName>
    <alternativeName>
        <fullName>Enolase 3</fullName>
    </alternativeName>
    <alternativeName>
        <fullName>Muscle-specific enolase</fullName>
        <shortName>MSE</shortName>
    </alternativeName>
    <alternativeName>
        <fullName>Skeletal muscle enolase</fullName>
    </alternativeName>
</protein>
<sequence>MAMQKIFAREILDSRGNPTVEVDLHTAKGRFRAAVPSGASTGIYEALELRDGDKSRYLGKGVLKAVEHINKTLGPALLEKKLSVVDQEKVDKFMIELDGTENKSKFGANAILGVSLAVCKAGAAEKGVPLYRHIADLAGNPDLVLPVPAFNVINGGSHAGNKLAMQEFMILPVGASSFREAMRIGAEVYHHLKGVIKGKYGKDATNVGDEGGFAPNILENNEALELLKTAIQAAGYPDKVVIGMDVAASEFYRNGKYDLDFKSPDDPSRHITGEKLGELYKSFIKNYPVVSIEDPFDQDDWKTWTSFLSGVNIQIVGDDLTVTNLKRIAQAVEKKACNCLLLKVNQIGSVTESIQACKLAQSNGWGVMVSHRSGETEDTFIADLVVGLCTGQIKTGAPCRSERLAKYNQLMRIEEALGDKAVFAGRKFRNPKAK</sequence>
<reference key="1">
    <citation type="submission" date="2006-01" db="EMBL/GenBank/DDBJ databases">
        <title>Molecular characterization and expression pattern of the porcine enolase 3 (beta, muscle) (ENO3) gene.</title>
        <authorList>
            <person name="Wu J."/>
            <person name="Deng C.Y."/>
            <person name="Xiong Y.Z."/>
        </authorList>
    </citation>
    <scope>NUCLEOTIDE SEQUENCE [MRNA]</scope>
    <source>
        <tissue>Skeletal muscle</tissue>
    </source>
</reference>
<reference key="2">
    <citation type="submission" date="2006-06" db="EMBL/GenBank/DDBJ databases">
        <title>Molecular characterization, expression pattern and polymorphism of the porcine ENO3 gene.</title>
        <authorList>
            <person name="Wu J."/>
            <person name="Deng C.Y."/>
            <person name="Xiong Y.Z."/>
        </authorList>
    </citation>
    <scope>NUCLEOTIDE SEQUENCE [GENOMIC DNA]</scope>
</reference>
<comment type="function">
    <text evidence="3">Glycolytic enzyme that catalyzes the conversion of 2-phosphoglycerate to phosphoenolpyruvate. Appears to have a function in striated muscle development and regeneration.</text>
</comment>
<comment type="catalytic activity">
    <reaction evidence="3">
        <text>(2R)-2-phosphoglycerate = phosphoenolpyruvate + H2O</text>
        <dbReference type="Rhea" id="RHEA:10164"/>
        <dbReference type="ChEBI" id="CHEBI:15377"/>
        <dbReference type="ChEBI" id="CHEBI:58289"/>
        <dbReference type="ChEBI" id="CHEBI:58702"/>
        <dbReference type="EC" id="4.2.1.11"/>
    </reaction>
    <physiologicalReaction direction="left-to-right" evidence="3">
        <dbReference type="Rhea" id="RHEA:10165"/>
    </physiologicalReaction>
</comment>
<comment type="cofactor">
    <cofactor evidence="1">
        <name>Mg(2+)</name>
        <dbReference type="ChEBI" id="CHEBI:18420"/>
    </cofactor>
    <text evidence="1">Mg(2+) is required for catalysis and for stabilizing the dimer.</text>
</comment>
<comment type="pathway">
    <text evidence="3">Carbohydrate degradation; glycolysis; pyruvate from D-glyceraldehyde 3-phosphate: step 4/5.</text>
</comment>
<comment type="subunit">
    <text evidence="1">Mammalian enolase is composed of 3 isozyme subunits, alpha, beta and gamma, which can form homodimers or heterodimers which are cell-type and development-specific. Interacts with PNKD (By similarity).</text>
</comment>
<comment type="subcellular location">
    <subcellularLocation>
        <location>Cytoplasm</location>
    </subcellularLocation>
    <text evidence="1">Localized to the Z line. Some colocalization with CKM at M-band (By similarity).</text>
</comment>
<comment type="similarity">
    <text evidence="4">Belongs to the enolase family.</text>
</comment>
<dbReference type="EC" id="4.2.1.11" evidence="3"/>
<dbReference type="EMBL" id="DQ355513">
    <property type="protein sequence ID" value="ABC75829.1"/>
    <property type="molecule type" value="mRNA"/>
</dbReference>
<dbReference type="EMBL" id="DQ676935">
    <property type="protein sequence ID" value="ABG73136.1"/>
    <property type="molecule type" value="Genomic_DNA"/>
</dbReference>
<dbReference type="RefSeq" id="NP_001037992.1">
    <property type="nucleotide sequence ID" value="NM_001044527.1"/>
</dbReference>
<dbReference type="SMR" id="Q1KYT0"/>
<dbReference type="FunCoup" id="Q1KYT0">
    <property type="interactions" value="959"/>
</dbReference>
<dbReference type="STRING" id="9823.ENSSSCP00000034676"/>
<dbReference type="PaxDb" id="9823-ENSSSCP00000018966"/>
<dbReference type="PeptideAtlas" id="Q1KYT0"/>
<dbReference type="GeneID" id="692156"/>
<dbReference type="KEGG" id="ssc:692156"/>
<dbReference type="CTD" id="2027"/>
<dbReference type="eggNOG" id="KOG2670">
    <property type="taxonomic scope" value="Eukaryota"/>
</dbReference>
<dbReference type="InParanoid" id="Q1KYT0"/>
<dbReference type="OrthoDB" id="1739814at2759"/>
<dbReference type="SABIO-RK" id="Q1KYT0"/>
<dbReference type="UniPathway" id="UPA00109">
    <property type="reaction ID" value="UER00187"/>
</dbReference>
<dbReference type="Proteomes" id="UP000008227">
    <property type="component" value="Unplaced"/>
</dbReference>
<dbReference type="Proteomes" id="UP000314985">
    <property type="component" value="Unplaced"/>
</dbReference>
<dbReference type="Proteomes" id="UP000694570">
    <property type="component" value="Unplaced"/>
</dbReference>
<dbReference type="Proteomes" id="UP000694571">
    <property type="component" value="Unplaced"/>
</dbReference>
<dbReference type="Proteomes" id="UP000694720">
    <property type="component" value="Unplaced"/>
</dbReference>
<dbReference type="Proteomes" id="UP000694722">
    <property type="component" value="Unplaced"/>
</dbReference>
<dbReference type="Proteomes" id="UP000694723">
    <property type="component" value="Unplaced"/>
</dbReference>
<dbReference type="Proteomes" id="UP000694724">
    <property type="component" value="Unplaced"/>
</dbReference>
<dbReference type="Proteomes" id="UP000694725">
    <property type="component" value="Unplaced"/>
</dbReference>
<dbReference type="Proteomes" id="UP000694726">
    <property type="component" value="Unplaced"/>
</dbReference>
<dbReference type="Proteomes" id="UP000694727">
    <property type="component" value="Unplaced"/>
</dbReference>
<dbReference type="Proteomes" id="UP000694728">
    <property type="component" value="Unplaced"/>
</dbReference>
<dbReference type="GO" id="GO:0000015">
    <property type="term" value="C:phosphopyruvate hydratase complex"/>
    <property type="evidence" value="ECO:0000318"/>
    <property type="project" value="GO_Central"/>
</dbReference>
<dbReference type="GO" id="GO:0000287">
    <property type="term" value="F:magnesium ion binding"/>
    <property type="evidence" value="ECO:0007669"/>
    <property type="project" value="InterPro"/>
</dbReference>
<dbReference type="GO" id="GO:0004634">
    <property type="term" value="F:phosphopyruvate hydratase activity"/>
    <property type="evidence" value="ECO:0000318"/>
    <property type="project" value="GO_Central"/>
</dbReference>
<dbReference type="GO" id="GO:0006096">
    <property type="term" value="P:glycolytic process"/>
    <property type="evidence" value="ECO:0000318"/>
    <property type="project" value="GO_Central"/>
</dbReference>
<dbReference type="CDD" id="cd03313">
    <property type="entry name" value="enolase"/>
    <property type="match status" value="1"/>
</dbReference>
<dbReference type="FunFam" id="3.30.390.10:FF:000001">
    <property type="entry name" value="Enolase"/>
    <property type="match status" value="1"/>
</dbReference>
<dbReference type="FunFam" id="3.20.20.120:FF:000002">
    <property type="entry name" value="Enolase 1"/>
    <property type="match status" value="1"/>
</dbReference>
<dbReference type="Gene3D" id="3.20.20.120">
    <property type="entry name" value="Enolase-like C-terminal domain"/>
    <property type="match status" value="1"/>
</dbReference>
<dbReference type="Gene3D" id="3.30.390.10">
    <property type="entry name" value="Enolase-like, N-terminal domain"/>
    <property type="match status" value="1"/>
</dbReference>
<dbReference type="HAMAP" id="MF_00318">
    <property type="entry name" value="Enolase"/>
    <property type="match status" value="1"/>
</dbReference>
<dbReference type="InterPro" id="IPR000941">
    <property type="entry name" value="Enolase"/>
</dbReference>
<dbReference type="InterPro" id="IPR036849">
    <property type="entry name" value="Enolase-like_C_sf"/>
</dbReference>
<dbReference type="InterPro" id="IPR029017">
    <property type="entry name" value="Enolase-like_N"/>
</dbReference>
<dbReference type="InterPro" id="IPR020810">
    <property type="entry name" value="Enolase_C"/>
</dbReference>
<dbReference type="InterPro" id="IPR020809">
    <property type="entry name" value="Enolase_CS"/>
</dbReference>
<dbReference type="InterPro" id="IPR020811">
    <property type="entry name" value="Enolase_N"/>
</dbReference>
<dbReference type="NCBIfam" id="TIGR01060">
    <property type="entry name" value="eno"/>
    <property type="match status" value="1"/>
</dbReference>
<dbReference type="PANTHER" id="PTHR11902:SF5">
    <property type="entry name" value="BETA-ENOLASE"/>
    <property type="match status" value="1"/>
</dbReference>
<dbReference type="PANTHER" id="PTHR11902">
    <property type="entry name" value="ENOLASE"/>
    <property type="match status" value="1"/>
</dbReference>
<dbReference type="Pfam" id="PF00113">
    <property type="entry name" value="Enolase_C"/>
    <property type="match status" value="1"/>
</dbReference>
<dbReference type="Pfam" id="PF03952">
    <property type="entry name" value="Enolase_N"/>
    <property type="match status" value="1"/>
</dbReference>
<dbReference type="PIRSF" id="PIRSF001400">
    <property type="entry name" value="Enolase"/>
    <property type="match status" value="1"/>
</dbReference>
<dbReference type="PRINTS" id="PR00148">
    <property type="entry name" value="ENOLASE"/>
</dbReference>
<dbReference type="SFLD" id="SFLDS00001">
    <property type="entry name" value="Enolase"/>
    <property type="match status" value="1"/>
</dbReference>
<dbReference type="SFLD" id="SFLDF00002">
    <property type="entry name" value="enolase"/>
    <property type="match status" value="1"/>
</dbReference>
<dbReference type="SMART" id="SM01192">
    <property type="entry name" value="Enolase_C"/>
    <property type="match status" value="1"/>
</dbReference>
<dbReference type="SMART" id="SM01193">
    <property type="entry name" value="Enolase_N"/>
    <property type="match status" value="1"/>
</dbReference>
<dbReference type="SUPFAM" id="SSF51604">
    <property type="entry name" value="Enolase C-terminal domain-like"/>
    <property type="match status" value="1"/>
</dbReference>
<dbReference type="SUPFAM" id="SSF54826">
    <property type="entry name" value="Enolase N-terminal domain-like"/>
    <property type="match status" value="1"/>
</dbReference>
<dbReference type="PROSITE" id="PS00164">
    <property type="entry name" value="ENOLASE"/>
    <property type="match status" value="1"/>
</dbReference>
<feature type="initiator methionine" description="Removed" evidence="2">
    <location>
        <position position="1"/>
    </location>
</feature>
<feature type="chain" id="PRO_0000273972" description="Beta-enolase">
    <location>
        <begin position="2"/>
        <end position="434"/>
    </location>
</feature>
<feature type="active site" description="Proton donor" evidence="1">
    <location>
        <position position="210"/>
    </location>
</feature>
<feature type="active site" description="Proton acceptor" evidence="1">
    <location>
        <position position="343"/>
    </location>
</feature>
<feature type="binding site" evidence="1">
    <location>
        <position position="158"/>
    </location>
    <ligand>
        <name>substrate</name>
    </ligand>
</feature>
<feature type="binding site" evidence="1">
    <location>
        <position position="167"/>
    </location>
    <ligand>
        <name>substrate</name>
    </ligand>
</feature>
<feature type="binding site" evidence="1">
    <location>
        <position position="245"/>
    </location>
    <ligand>
        <name>Mg(2+)</name>
        <dbReference type="ChEBI" id="CHEBI:18420"/>
    </ligand>
</feature>
<feature type="binding site" evidence="1">
    <location>
        <position position="293"/>
    </location>
    <ligand>
        <name>Mg(2+)</name>
        <dbReference type="ChEBI" id="CHEBI:18420"/>
    </ligand>
</feature>
<feature type="binding site" evidence="1">
    <location>
        <position position="293"/>
    </location>
    <ligand>
        <name>substrate</name>
    </ligand>
</feature>
<feature type="binding site" evidence="1">
    <location>
        <position position="318"/>
    </location>
    <ligand>
        <name>Mg(2+)</name>
        <dbReference type="ChEBI" id="CHEBI:18420"/>
    </ligand>
</feature>
<feature type="binding site" evidence="1">
    <location>
        <position position="318"/>
    </location>
    <ligand>
        <name>substrate</name>
    </ligand>
</feature>
<feature type="binding site" evidence="1">
    <location>
        <begin position="370"/>
        <end position="373"/>
    </location>
    <ligand>
        <name>substrate</name>
    </ligand>
</feature>
<feature type="binding site" evidence="1">
    <location>
        <position position="394"/>
    </location>
    <ligand>
        <name>substrate</name>
    </ligand>
</feature>
<feature type="modified residue" description="N-acetylalanine" evidence="2">
    <location>
        <position position="2"/>
    </location>
</feature>
<feature type="modified residue" description="Phosphothreonine" evidence="3">
    <location>
        <position position="72"/>
    </location>
</feature>
<feature type="modified residue" description="Phosphoserine" evidence="3">
    <location>
        <position position="83"/>
    </location>
</feature>
<feature type="modified residue" description="Phosphoserine" evidence="3">
    <location>
        <position position="157"/>
    </location>
</feature>
<feature type="modified residue" description="Phosphoserine" evidence="2">
    <location>
        <position position="176"/>
    </location>
</feature>
<feature type="modified residue" description="Phosphothreonine" evidence="3">
    <location>
        <position position="205"/>
    </location>
</feature>
<feature type="modified residue" description="Phosphothreonine" evidence="3">
    <location>
        <position position="229"/>
    </location>
</feature>
<feature type="modified residue" description="Phosphotyrosine" evidence="3">
    <location>
        <position position="236"/>
    </location>
</feature>
<feature type="modified residue" description="Phosphoserine" evidence="2">
    <location>
        <position position="263"/>
    </location>
</feature>
<accession>Q1KYT0</accession>
<evidence type="ECO:0000250" key="1"/>
<evidence type="ECO:0000250" key="2">
    <source>
        <dbReference type="UniProtKB" id="P13929"/>
    </source>
</evidence>
<evidence type="ECO:0000250" key="3">
    <source>
        <dbReference type="UniProtKB" id="P15429"/>
    </source>
</evidence>
<evidence type="ECO:0000305" key="4"/>